<gene>
    <name evidence="14" type="primary">Atrn</name>
</gene>
<reference evidence="11 13" key="1">
    <citation type="journal article" date="2001" name="Proc. Natl. Acad. Sci. U.S.A.">
        <title>Attractin/mahogany/zitter plays a critical role in myelination of the central nervous system.</title>
        <authorList>
            <person name="Kuramoto T."/>
            <person name="Kitada K."/>
            <person name="Inui T."/>
            <person name="Sasaki Y."/>
            <person name="Ito K."/>
            <person name="Hase T."/>
            <person name="Kawaguchi S."/>
            <person name="Ogawa Y."/>
            <person name="Nakao K."/>
            <person name="Barsh G.S."/>
            <person name="Nagao M."/>
            <person name="Ushijima T."/>
            <person name="Serikawa T."/>
        </authorList>
    </citation>
    <scope>NUCLEOTIDE SEQUENCE [GENOMIC DNA / MRNA] (ISOFORM 1)</scope>
    <scope>NUCLEOTIDE SEQUENCE [MRNA] (ISOFORM 2)</scope>
    <scope>FUNCTION</scope>
    <scope>DISEASE</scope>
    <source>
        <strain evidence="12">WTC</strain>
        <tissue evidence="9">Brain</tissue>
    </source>
</reference>
<feature type="signal peptide" evidence="4">
    <location>
        <begin position="1"/>
        <end position="23"/>
    </location>
</feature>
<feature type="propeptide" id="PRO_0000394773" evidence="1">
    <location>
        <begin position="24"/>
        <end position="86"/>
    </location>
</feature>
<feature type="chain" id="PRO_0000007485" description="Attractin">
    <location>
        <begin position="87"/>
        <end position="1432"/>
    </location>
</feature>
<feature type="topological domain" description="Extracellular" evidence="4">
    <location>
        <begin position="87"/>
        <end position="1282"/>
    </location>
</feature>
<feature type="transmembrane region" description="Helical" evidence="4">
    <location>
        <begin position="1283"/>
        <end position="1303"/>
    </location>
</feature>
<feature type="topological domain" description="Cytoplasmic" evidence="4">
    <location>
        <begin position="1304"/>
        <end position="1432"/>
    </location>
</feature>
<feature type="domain" description="EGF-like 1" evidence="7">
    <location>
        <begin position="100"/>
        <end position="133"/>
    </location>
</feature>
<feature type="domain" description="CUB" evidence="6">
    <location>
        <begin position="135"/>
        <end position="251"/>
    </location>
</feature>
<feature type="domain" description="EGF-like 2" evidence="7">
    <location>
        <begin position="249"/>
        <end position="286"/>
    </location>
</feature>
<feature type="repeat" description="Kelch 1" evidence="4">
    <location>
        <begin position="355"/>
        <end position="405"/>
    </location>
</feature>
<feature type="repeat" description="Kelch 2" evidence="4">
    <location>
        <begin position="406"/>
        <end position="454"/>
    </location>
</feature>
<feature type="repeat" description="Kelch 3" evidence="4">
    <location>
        <begin position="464"/>
        <end position="511"/>
    </location>
</feature>
<feature type="repeat" description="Kelch 4" evidence="4">
    <location>
        <begin position="516"/>
        <end position="567"/>
    </location>
</feature>
<feature type="repeat" description="Kelch 5" evidence="4">
    <location>
        <begin position="569"/>
        <end position="627"/>
    </location>
</feature>
<feature type="repeat" description="Kelch 6" evidence="4">
    <location>
        <begin position="628"/>
        <end position="674"/>
    </location>
</feature>
<feature type="domain" description="PSI 1">
    <location>
        <begin position="706"/>
        <end position="751"/>
    </location>
</feature>
<feature type="domain" description="PSI 2">
    <location>
        <begin position="758"/>
        <end position="797"/>
    </location>
</feature>
<feature type="domain" description="C-type lectin" evidence="5">
    <location>
        <begin position="798"/>
        <end position="922"/>
    </location>
</feature>
<feature type="domain" description="PSI 3">
    <location>
        <begin position="935"/>
        <end position="986"/>
    </location>
</feature>
<feature type="domain" description="PSI 4">
    <location>
        <begin position="989"/>
        <end position="1064"/>
    </location>
</feature>
<feature type="domain" description="Laminin EGF-like 1" evidence="8">
    <location>
        <begin position="1066"/>
        <end position="1111"/>
    </location>
</feature>
<feature type="domain" description="Laminin EGF-like 2" evidence="8">
    <location>
        <begin position="1112"/>
        <end position="1160"/>
    </location>
</feature>
<feature type="glycosylation site" description="N-linked (GlcNAc...) asparagine" evidence="4">
    <location>
        <position position="216"/>
    </location>
</feature>
<feature type="glycosylation site" description="N-linked (GlcNAc...) asparagine" evidence="4">
    <location>
        <position position="240"/>
    </location>
</feature>
<feature type="glycosylation site" description="N-linked (GlcNAc...) asparagine" evidence="4">
    <location>
        <position position="245"/>
    </location>
</feature>
<feature type="glycosylation site" description="N-linked (GlcNAc...) asparagine" evidence="4">
    <location>
        <position position="256"/>
    </location>
</feature>
<feature type="glycosylation site" description="N-linked (GlcNAc...) asparagine" evidence="4">
    <location>
        <position position="267"/>
    </location>
</feature>
<feature type="glycosylation site" description="N-linked (GlcNAc...) asparagine" evidence="4">
    <location>
        <position position="303"/>
    </location>
</feature>
<feature type="glycosylation site" description="N-linked (GlcNAc...) asparagine" evidence="4">
    <location>
        <position position="328"/>
    </location>
</feature>
<feature type="glycosylation site" description="N-linked (GlcNAc...) asparagine" evidence="4">
    <location>
        <position position="365"/>
    </location>
</feature>
<feature type="glycosylation site" description="N-linked (GlcNAc...) asparagine" evidence="4">
    <location>
        <position position="386"/>
    </location>
</feature>
<feature type="glycosylation site" description="N-linked (GlcNAc...) asparagine" evidence="4">
    <location>
        <position position="419"/>
    </location>
</feature>
<feature type="glycosylation site" description="N-linked (GlcNAc...) asparagine" evidence="4">
    <location>
        <position position="431"/>
    </location>
</feature>
<feature type="glycosylation site" description="N-linked (GlcNAc...) asparagine" evidence="4">
    <location>
        <position position="578"/>
    </location>
</feature>
<feature type="glycosylation site" description="N-linked (GlcNAc...) asparagine" evidence="4">
    <location>
        <position position="626"/>
    </location>
</feature>
<feature type="glycosylation site" description="N-linked (GlcNAc...) asparagine" evidence="4">
    <location>
        <position position="734"/>
    </location>
</feature>
<feature type="glycosylation site" description="N-linked (GlcNAc...) asparagine" evidence="4">
    <location>
        <position position="866"/>
    </location>
</feature>
<feature type="glycosylation site" description="N-linked (GlcNAc...) asparagine" evidence="4">
    <location>
        <position position="917"/>
    </location>
</feature>
<feature type="glycosylation site" description="N-linked (GlcNAc...) asparagine" evidence="4">
    <location>
        <position position="926"/>
    </location>
</feature>
<feature type="glycosylation site" description="N-linked (GlcNAc...) asparagine" evidence="4">
    <location>
        <position position="989"/>
    </location>
</feature>
<feature type="glycosylation site" description="N-linked (GlcNAc...) asparagine" evidence="4">
    <location>
        <position position="1046"/>
    </location>
</feature>
<feature type="glycosylation site" description="N-linked (GlcNAc...) asparagine" evidence="4">
    <location>
        <position position="1057"/>
    </location>
</feature>
<feature type="glycosylation site" description="N-linked (GlcNAc...) asparagine" evidence="4">
    <location>
        <position position="1076"/>
    </location>
</feature>
<feature type="glycosylation site" description="N-linked (GlcNAc...) asparagine" evidence="4">
    <location>
        <position position="1201"/>
    </location>
</feature>
<feature type="glycosylation site" description="N-linked (GlcNAc...) asparagine" evidence="4">
    <location>
        <position position="1209"/>
    </location>
</feature>
<feature type="glycosylation site" description="N-linked (GlcNAc...) asparagine" evidence="4">
    <location>
        <position position="1253"/>
    </location>
</feature>
<feature type="glycosylation site" description="N-linked (GlcNAc...) asparagine" evidence="4">
    <location>
        <position position="1262"/>
    </location>
</feature>
<feature type="disulfide bond" evidence="3">
    <location>
        <begin position="104"/>
        <end position="114"/>
    </location>
</feature>
<feature type="disulfide bond" evidence="3">
    <location>
        <begin position="108"/>
        <end position="121"/>
    </location>
</feature>
<feature type="disulfide bond" evidence="3">
    <location>
        <begin position="123"/>
        <end position="132"/>
    </location>
</feature>
<feature type="disulfide bond" evidence="1">
    <location>
        <begin position="135"/>
        <end position="161"/>
    </location>
</feature>
<feature type="disulfide bond" evidence="1">
    <location>
        <begin position="253"/>
        <end position="263"/>
    </location>
</feature>
<feature type="disulfide bond" evidence="1">
    <location>
        <begin position="257"/>
        <end position="274"/>
    </location>
</feature>
<feature type="disulfide bond" evidence="1">
    <location>
        <begin position="276"/>
        <end position="285"/>
    </location>
</feature>
<feature type="disulfide bond" evidence="1">
    <location>
        <begin position="819"/>
        <end position="921"/>
    </location>
</feature>
<feature type="disulfide bond" evidence="3">
    <location>
        <begin position="1066"/>
        <end position="1074"/>
    </location>
</feature>
<feature type="disulfide bond" evidence="3">
    <location>
        <begin position="1068"/>
        <end position="1080"/>
    </location>
</feature>
<feature type="disulfide bond" evidence="3">
    <location>
        <begin position="1083"/>
        <end position="1092"/>
    </location>
</feature>
<feature type="disulfide bond" evidence="3">
    <location>
        <begin position="1095"/>
        <end position="1109"/>
    </location>
</feature>
<feature type="disulfide bond" evidence="1">
    <location>
        <begin position="1112"/>
        <end position="1121"/>
    </location>
</feature>
<feature type="disulfide bond" evidence="1">
    <location>
        <begin position="1114"/>
        <end position="1128"/>
    </location>
</feature>
<feature type="disulfide bond" evidence="1">
    <location>
        <begin position="1130"/>
        <end position="1140"/>
    </location>
</feature>
<feature type="disulfide bond" evidence="1">
    <location>
        <begin position="1143"/>
        <end position="1158"/>
    </location>
</feature>
<feature type="splice variant" id="VSP_051674" description="In isoform 2." evidence="10">
    <original>IAFSQ</original>
    <variation>VRVTS</variation>
    <location>
        <begin position="1271"/>
        <end position="1275"/>
    </location>
</feature>
<feature type="splice variant" id="VSP_051675" description="In isoform 2." evidence="10">
    <location>
        <begin position="1276"/>
        <end position="1432"/>
    </location>
</feature>
<feature type="sequence conflict" description="In Ref. 1; BAB21018." evidence="11" ref="1">
    <original>V</original>
    <variation>E</variation>
    <location>
        <position position="350"/>
    </location>
</feature>
<keyword id="KW-0025">Alternative splicing</keyword>
<keyword id="KW-1003">Cell membrane</keyword>
<keyword id="KW-1015">Disulfide bond</keyword>
<keyword id="KW-0245">EGF-like domain</keyword>
<keyword id="KW-0325">Glycoprotein</keyword>
<keyword id="KW-0395">Inflammatory response</keyword>
<keyword id="KW-0880">Kelch repeat</keyword>
<keyword id="KW-0424">Laminin EGF-like domain</keyword>
<keyword id="KW-0430">Lectin</keyword>
<keyword id="KW-0472">Membrane</keyword>
<keyword id="KW-0675">Receptor</keyword>
<keyword id="KW-1185">Reference proteome</keyword>
<keyword id="KW-0677">Repeat</keyword>
<keyword id="KW-0964">Secreted</keyword>
<keyword id="KW-0732">Signal</keyword>
<keyword id="KW-0812">Transmembrane</keyword>
<keyword id="KW-1133">Transmembrane helix</keyword>
<sequence>MVAAAAAAEATEARLRGYTTATAAPAGWKERQHRPCAATGAWRPWPRAGLCLPRVLSRALSPPPLLPLLPLLFSLLLLPLPREAEAAAVAAAVSGSAAAEAKECDRPCVNGGRCNPGTGQCVCPTGWVGEQCQHCGGRFRLTGSSGFVTDGPGNYKYKTKCTWLIEGQPNKIMRLRFNHFATECSWDHLYVYDGDSIYAPLIAAFSGLIVPERDGNETAPEVTVTSGYALLHFFSDAAYNLTGFNITYNFDMCPNNCSGRGECKSSNSSSTVECECSENWKGESCDIPHCTDNCGFPHRGICNASDTRGCSCFPHWQGPGCSIPVPANQSFWTREEYSDLKLPRASHKAVVNGNIMWVVGGYMFNHSDYSMVLAYDLASREWLSLNHSVNSVVVRYGHSLALHKDKIYMYGGKIDSTGNVTNELRVFHIHNESWVLLTPKAKDQYAVVGHSAHIVTLSSGRVVMLVIFGHCPLYGYISVVQEYDLEKNTWSILQTQGALVQGGYGHSSVYDHRTKALYVHGGYKAFSANKYRLADDLYRYHVDTQMWTILKDSRFFRYLHTAVIVSGTMLVFGGNTHNDTSMSHGAKCFSSDFMAYDIACDRWSVLPRPELHHDVNRFGHSAVLHNSTMYVFGGFNSLLLSDVLVFTSEQCDAHRSEAACVAAGPGIRCLWDTQSSRCTSWELATEEQAEKLKSECFSKRTLDHDRCDQHTDCYSCTANTNDCHWCNDHCVPVNHSCTEGQISIAKYDNCPKDNPMYYCNKKTSCRSCALDQNCQWEPRNQECIALPENICGIGWHLVGNSCLKITTAKENYDNAKLSCRNHNAFLASLTSQKKVEFVLKQLRLMQSSQSTSKLTLTPWVGLRKINVSYWCWEDMSPFTNSLLQWMPSEPSDAGFCGILSEPSTRGLKAATCINPLNGSVCERPANHSAKQCRTPCALRTACGECTSSSSECMWCSNMKQCVDSNAYVASFPFGQCMEWYTMSSCPPENCSGYCTCSHCLEQPGCGWCTDPSNTGKGKCIEGSYKGPVKMPSHASTGNVYPQPLLNSSMCLEDSRYNWSFIHCPACQCNGHSKCINQSICEKCEDLTTGKHCETCISGFYGDPTNGGKCQPCKCNGHASLCNTNTGKCFCTTKGVKGEECQLCEVENRYQGNPLKGTCYYTLLIDYQFTFSLSQEDDRYYTAINFVATPDEQNRDLDMFINASKNFNLNITWATSFPAGTQTGEEVPVVSKTNIKEYKDSFSNEKFDFRNHPNITFFVYVSNFTWPIKIQIAFSQHSNFMDLVQFFVTFFSCFLSLLLVAAVVWKIKQSCWASRRREQLLREMQQMASRPFASVNVALETDEEPPDLIGGSIKTVPKPIALEPCFGNKAAVLSVFVRLPRGLGGIPPPGQSGLAVASALVDISQQMPIVYKEKSGAVRNRKQQPPAQPGTCI</sequence>
<organism>
    <name type="scientific">Rattus norvegicus</name>
    <name type="common">Rat</name>
    <dbReference type="NCBI Taxonomy" id="10116"/>
    <lineage>
        <taxon>Eukaryota</taxon>
        <taxon>Metazoa</taxon>
        <taxon>Chordata</taxon>
        <taxon>Craniata</taxon>
        <taxon>Vertebrata</taxon>
        <taxon>Euteleostomi</taxon>
        <taxon>Mammalia</taxon>
        <taxon>Eutheria</taxon>
        <taxon>Euarchontoglires</taxon>
        <taxon>Glires</taxon>
        <taxon>Rodentia</taxon>
        <taxon>Myomorpha</taxon>
        <taxon>Muroidea</taxon>
        <taxon>Muridae</taxon>
        <taxon>Murinae</taxon>
        <taxon>Rattus</taxon>
    </lineage>
</organism>
<dbReference type="EMBL" id="AB038387">
    <property type="protein sequence ID" value="BAB21017.1"/>
    <property type="molecule type" value="mRNA"/>
</dbReference>
<dbReference type="EMBL" id="AB038388">
    <property type="protein sequence ID" value="BAB21018.1"/>
    <property type="molecule type" value="mRNA"/>
</dbReference>
<dbReference type="EMBL" id="AB049248">
    <property type="protein sequence ID" value="BAB21058.1"/>
    <property type="molecule type" value="Genomic_DNA"/>
</dbReference>
<dbReference type="RefSeq" id="NP_112641.1">
    <molecule id="Q99J86-1"/>
    <property type="nucleotide sequence ID" value="NM_031351.2"/>
</dbReference>
<dbReference type="SMR" id="Q99J86"/>
<dbReference type="FunCoup" id="Q99J86">
    <property type="interactions" value="2847"/>
</dbReference>
<dbReference type="STRING" id="10116.ENSRNOP00000028847"/>
<dbReference type="GlyCosmos" id="Q99J86">
    <property type="glycosylation" value="25 sites, 4 glycans"/>
</dbReference>
<dbReference type="GlyGen" id="Q99J86">
    <property type="glycosylation" value="25 sites, 4 N-linked glycans (1 site)"/>
</dbReference>
<dbReference type="iPTMnet" id="Q99J86"/>
<dbReference type="PhosphoSitePlus" id="Q99J86"/>
<dbReference type="SwissPalm" id="Q99J86"/>
<dbReference type="PaxDb" id="10116-ENSRNOP00000028847"/>
<dbReference type="GeneID" id="83526"/>
<dbReference type="KEGG" id="rno:83526"/>
<dbReference type="UCSC" id="RGD:69063">
    <molecule id="Q99J86-1"/>
    <property type="organism name" value="rat"/>
</dbReference>
<dbReference type="AGR" id="RGD:69063"/>
<dbReference type="CTD" id="8455"/>
<dbReference type="RGD" id="69063">
    <property type="gene designation" value="Atrn"/>
</dbReference>
<dbReference type="VEuPathDB" id="HostDB:ENSRNOG00000021240"/>
<dbReference type="eggNOG" id="KOG1388">
    <property type="taxonomic scope" value="Eukaryota"/>
</dbReference>
<dbReference type="HOGENOM" id="CLU_003930_0_0_1"/>
<dbReference type="InParanoid" id="Q99J86"/>
<dbReference type="OrthoDB" id="14110at9989"/>
<dbReference type="PhylomeDB" id="Q99J86"/>
<dbReference type="TreeFam" id="TF321873"/>
<dbReference type="PRO" id="PR:Q99J86"/>
<dbReference type="Proteomes" id="UP000002494">
    <property type="component" value="Chromosome 3"/>
</dbReference>
<dbReference type="Bgee" id="ENSRNOG00000021240">
    <property type="expression patterns" value="Expressed in liver and 19 other cell types or tissues"/>
</dbReference>
<dbReference type="GO" id="GO:0005615">
    <property type="term" value="C:extracellular space"/>
    <property type="evidence" value="ECO:0000250"/>
    <property type="project" value="UniProtKB"/>
</dbReference>
<dbReference type="GO" id="GO:0005886">
    <property type="term" value="C:plasma membrane"/>
    <property type="evidence" value="ECO:0007669"/>
    <property type="project" value="UniProtKB-SubCell"/>
</dbReference>
<dbReference type="GO" id="GO:0030246">
    <property type="term" value="F:carbohydrate binding"/>
    <property type="evidence" value="ECO:0007669"/>
    <property type="project" value="UniProtKB-KW"/>
</dbReference>
<dbReference type="GO" id="GO:0005112">
    <property type="term" value="F:Notch binding"/>
    <property type="evidence" value="ECO:0000318"/>
    <property type="project" value="GO_Central"/>
</dbReference>
<dbReference type="GO" id="GO:0038023">
    <property type="term" value="F:signaling receptor activity"/>
    <property type="evidence" value="ECO:0000266"/>
    <property type="project" value="RGD"/>
</dbReference>
<dbReference type="GO" id="GO:0021549">
    <property type="term" value="P:cerebellum development"/>
    <property type="evidence" value="ECO:0000266"/>
    <property type="project" value="RGD"/>
</dbReference>
<dbReference type="GO" id="GO:0006954">
    <property type="term" value="P:inflammatory response"/>
    <property type="evidence" value="ECO:0007669"/>
    <property type="project" value="UniProtKB-KW"/>
</dbReference>
<dbReference type="GO" id="GO:0042552">
    <property type="term" value="P:myelination"/>
    <property type="evidence" value="ECO:0000266"/>
    <property type="project" value="RGD"/>
</dbReference>
<dbReference type="GO" id="GO:0043473">
    <property type="term" value="P:pigmentation"/>
    <property type="evidence" value="ECO:0000315"/>
    <property type="project" value="CACAO"/>
</dbReference>
<dbReference type="GO" id="GO:0040014">
    <property type="term" value="P:regulation of multicellular organism growth"/>
    <property type="evidence" value="ECO:0000266"/>
    <property type="project" value="RGD"/>
</dbReference>
<dbReference type="GO" id="GO:0006979">
    <property type="term" value="P:response to oxidative stress"/>
    <property type="evidence" value="ECO:0000315"/>
    <property type="project" value="RGD"/>
</dbReference>
<dbReference type="CDD" id="cd00041">
    <property type="entry name" value="CUB"/>
    <property type="match status" value="1"/>
</dbReference>
<dbReference type="CDD" id="cd00055">
    <property type="entry name" value="EGF_Lam"/>
    <property type="match status" value="3"/>
</dbReference>
<dbReference type="FunFam" id="2.120.10.80:FF:000034">
    <property type="entry name" value="Attractin"/>
    <property type="match status" value="1"/>
</dbReference>
<dbReference type="FunFam" id="3.10.100.10:FF:000012">
    <property type="entry name" value="Attractin"/>
    <property type="match status" value="1"/>
</dbReference>
<dbReference type="FunFam" id="2.120.10.80:FF:000031">
    <property type="entry name" value="attractin"/>
    <property type="match status" value="1"/>
</dbReference>
<dbReference type="FunFam" id="2.10.25.10:FF:000079">
    <property type="entry name" value="Attractin like 1"/>
    <property type="match status" value="1"/>
</dbReference>
<dbReference type="FunFam" id="2.60.120.290:FF:000008">
    <property type="entry name" value="Attractin like 1"/>
    <property type="match status" value="1"/>
</dbReference>
<dbReference type="Gene3D" id="2.120.10.80">
    <property type="entry name" value="Kelch-type beta propeller"/>
    <property type="match status" value="2"/>
</dbReference>
<dbReference type="Gene3D" id="2.10.25.10">
    <property type="entry name" value="Laminin"/>
    <property type="match status" value="3"/>
</dbReference>
<dbReference type="Gene3D" id="3.10.100.10">
    <property type="entry name" value="Mannose-Binding Protein A, subunit A"/>
    <property type="match status" value="1"/>
</dbReference>
<dbReference type="Gene3D" id="2.60.120.290">
    <property type="entry name" value="Spermadhesin, CUB domain"/>
    <property type="match status" value="1"/>
</dbReference>
<dbReference type="InterPro" id="IPR056737">
    <property type="entry name" value="Beta-prop_ATRN-MKLN-like"/>
</dbReference>
<dbReference type="InterPro" id="IPR001304">
    <property type="entry name" value="C-type_lectin-like"/>
</dbReference>
<dbReference type="InterPro" id="IPR016186">
    <property type="entry name" value="C-type_lectin-like/link_sf"/>
</dbReference>
<dbReference type="InterPro" id="IPR016187">
    <property type="entry name" value="CTDL_fold"/>
</dbReference>
<dbReference type="InterPro" id="IPR000859">
    <property type="entry name" value="CUB_dom"/>
</dbReference>
<dbReference type="InterPro" id="IPR000742">
    <property type="entry name" value="EGF-like_dom"/>
</dbReference>
<dbReference type="InterPro" id="IPR056732">
    <property type="entry name" value="GBD_ATRN"/>
</dbReference>
<dbReference type="InterPro" id="IPR015915">
    <property type="entry name" value="Kelch-typ_b-propeller"/>
</dbReference>
<dbReference type="InterPro" id="IPR002049">
    <property type="entry name" value="LE_dom"/>
</dbReference>
<dbReference type="InterPro" id="IPR056863">
    <property type="entry name" value="LMN_ATRN_NET-like_EGF"/>
</dbReference>
<dbReference type="InterPro" id="IPR051568">
    <property type="entry name" value="LZTR1/Attractin"/>
</dbReference>
<dbReference type="InterPro" id="IPR002165">
    <property type="entry name" value="Plexin_repeat"/>
</dbReference>
<dbReference type="InterPro" id="IPR016201">
    <property type="entry name" value="PSI"/>
</dbReference>
<dbReference type="InterPro" id="IPR035914">
    <property type="entry name" value="Sperma_CUB_dom_sf"/>
</dbReference>
<dbReference type="PANTHER" id="PTHR46376:SF3">
    <property type="entry name" value="ATTRACTIN"/>
    <property type="match status" value="1"/>
</dbReference>
<dbReference type="PANTHER" id="PTHR46376">
    <property type="entry name" value="LEUCINE-ZIPPER-LIKE TRANSCRIPTIONAL REGULATOR 1"/>
    <property type="match status" value="1"/>
</dbReference>
<dbReference type="Pfam" id="PF24981">
    <property type="entry name" value="Beta-prop_ATRN-LZTR1"/>
    <property type="match status" value="1"/>
</dbReference>
<dbReference type="Pfam" id="PF00431">
    <property type="entry name" value="CUB"/>
    <property type="match status" value="1"/>
</dbReference>
<dbReference type="Pfam" id="PF24973">
    <property type="entry name" value="EGF_LMN_ATRN"/>
    <property type="match status" value="1"/>
</dbReference>
<dbReference type="Pfam" id="PF23106">
    <property type="entry name" value="EGF_Teneurin"/>
    <property type="match status" value="1"/>
</dbReference>
<dbReference type="Pfam" id="PF24972">
    <property type="entry name" value="GBD_ATRN"/>
    <property type="match status" value="1"/>
</dbReference>
<dbReference type="Pfam" id="PF00059">
    <property type="entry name" value="Lectin_C"/>
    <property type="match status" value="1"/>
</dbReference>
<dbReference type="Pfam" id="PF01437">
    <property type="entry name" value="PSI"/>
    <property type="match status" value="2"/>
</dbReference>
<dbReference type="SMART" id="SM00034">
    <property type="entry name" value="CLECT"/>
    <property type="match status" value="1"/>
</dbReference>
<dbReference type="SMART" id="SM00042">
    <property type="entry name" value="CUB"/>
    <property type="match status" value="1"/>
</dbReference>
<dbReference type="SMART" id="SM00181">
    <property type="entry name" value="EGF"/>
    <property type="match status" value="3"/>
</dbReference>
<dbReference type="SMART" id="SM00180">
    <property type="entry name" value="EGF_Lam"/>
    <property type="match status" value="2"/>
</dbReference>
<dbReference type="SMART" id="SM00423">
    <property type="entry name" value="PSI"/>
    <property type="match status" value="5"/>
</dbReference>
<dbReference type="SUPFAM" id="SSF56436">
    <property type="entry name" value="C-type lectin-like"/>
    <property type="match status" value="1"/>
</dbReference>
<dbReference type="SUPFAM" id="SSF57196">
    <property type="entry name" value="EGF/Laminin"/>
    <property type="match status" value="1"/>
</dbReference>
<dbReference type="SUPFAM" id="SSF117281">
    <property type="entry name" value="Kelch motif"/>
    <property type="match status" value="1"/>
</dbReference>
<dbReference type="SUPFAM" id="SSF49854">
    <property type="entry name" value="Spermadhesin, CUB domain"/>
    <property type="match status" value="1"/>
</dbReference>
<dbReference type="PROSITE" id="PS50041">
    <property type="entry name" value="C_TYPE_LECTIN_2"/>
    <property type="match status" value="1"/>
</dbReference>
<dbReference type="PROSITE" id="PS01180">
    <property type="entry name" value="CUB"/>
    <property type="match status" value="1"/>
</dbReference>
<dbReference type="PROSITE" id="PS00022">
    <property type="entry name" value="EGF_1"/>
    <property type="match status" value="3"/>
</dbReference>
<dbReference type="PROSITE" id="PS01186">
    <property type="entry name" value="EGF_2"/>
    <property type="match status" value="1"/>
</dbReference>
<dbReference type="PROSITE" id="PS50026">
    <property type="entry name" value="EGF_3"/>
    <property type="match status" value="2"/>
</dbReference>
<dbReference type="PROSITE" id="PS01248">
    <property type="entry name" value="EGF_LAM_1"/>
    <property type="match status" value="1"/>
</dbReference>
<dbReference type="PROSITE" id="PS50027">
    <property type="entry name" value="EGF_LAM_2"/>
    <property type="match status" value="3"/>
</dbReference>
<name>ATRN_RAT</name>
<comment type="function">
    <text evidence="1 9">Involved in the initial immune cell clustering during inflammatory response and may regulate chemotactic activity of chemokines (By similarity). May play a role in melanocortin signaling pathways that regulate energy homeostasis and hair color. Low-affinity receptor for agouti (By similarity). Has a critical role in normal myelination in the central nervous system.</text>
</comment>
<comment type="subunit">
    <text evidence="1">Monomer and homotrimer.</text>
</comment>
<comment type="subcellular location">
    <molecule>Isoform 1</molecule>
    <subcellularLocation>
        <location evidence="2">Cell membrane</location>
        <topology evidence="2">Single-pass type I membrane protein</topology>
    </subcellularLocation>
</comment>
<comment type="subcellular location">
    <molecule>Isoform 2</molecule>
    <subcellularLocation>
        <location evidence="2">Secreted</location>
    </subcellularLocation>
</comment>
<comment type="alternative products">
    <event type="alternative splicing"/>
    <isoform>
        <id>Q99J86-1</id>
        <name evidence="9">1</name>
        <sequence type="displayed"/>
    </isoform>
    <isoform>
        <id>Q99J86-2</id>
        <name evidence="9">2</name>
        <sequence type="described" ref="VSP_051674 VSP_051675"/>
    </isoform>
</comment>
<comment type="PTM">
    <text evidence="1">Heavily glycosylated.</text>
</comment>
<comment type="disease">
    <text evidence="9">Defects in Atrn (isoform 1) are the cause of the autosomal recessive phenotype zitter (zi), which is characterized by progressive hypomyelination and vacuolation in the central nervous system resulting in early-onset tremor and progressive flaccid paresis of the hind limb. This is due to an 8-bp deletion at the splice donor site of intron 12, which results in aberrant and unstable transcripts.</text>
</comment>
<protein>
    <recommendedName>
        <fullName>Attractin</fullName>
    </recommendedName>
    <alternativeName>
        <fullName>Protein zitter</fullName>
    </alternativeName>
</protein>
<accession>Q99J86</accession>
<accession>Q99PW0</accession>
<evidence type="ECO:0000250" key="1"/>
<evidence type="ECO:0000250" key="2">
    <source>
        <dbReference type="UniProtKB" id="O75882"/>
    </source>
</evidence>
<evidence type="ECO:0000250" key="3">
    <source>
        <dbReference type="UniProtKB" id="Q9WU60"/>
    </source>
</evidence>
<evidence type="ECO:0000255" key="4"/>
<evidence type="ECO:0000255" key="5">
    <source>
        <dbReference type="PROSITE-ProRule" id="PRU00040"/>
    </source>
</evidence>
<evidence type="ECO:0000255" key="6">
    <source>
        <dbReference type="PROSITE-ProRule" id="PRU00059"/>
    </source>
</evidence>
<evidence type="ECO:0000255" key="7">
    <source>
        <dbReference type="PROSITE-ProRule" id="PRU00076"/>
    </source>
</evidence>
<evidence type="ECO:0000255" key="8">
    <source>
        <dbReference type="PROSITE-ProRule" id="PRU00460"/>
    </source>
</evidence>
<evidence type="ECO:0000269" key="9">
    <source>
    </source>
</evidence>
<evidence type="ECO:0000303" key="10">
    <source>
    </source>
</evidence>
<evidence type="ECO:0000305" key="11"/>
<evidence type="ECO:0000312" key="12">
    <source>
        <dbReference type="EMBL" id="BAB21017.1"/>
    </source>
</evidence>
<evidence type="ECO:0000312" key="13">
    <source>
        <dbReference type="EMBL" id="BAB21058.1"/>
    </source>
</evidence>
<evidence type="ECO:0000312" key="14">
    <source>
        <dbReference type="RGD" id="69063"/>
    </source>
</evidence>
<proteinExistence type="evidence at transcript level"/>